<organismHost>
    <name type="scientific">Mus musculus</name>
    <name type="common">Mouse</name>
    <dbReference type="NCBI Taxonomy" id="10090"/>
</organismHost>
<feature type="chain" id="PRO_0000115048" description="Middle T antigen">
    <location>
        <begin position="1"/>
        <end position="421"/>
    </location>
</feature>
<feature type="topological domain" description="Cytoplasmic" evidence="2">
    <location>
        <begin position="1"/>
        <end position="394"/>
    </location>
</feature>
<feature type="transmembrane region" description="Helical" evidence="2">
    <location>
        <begin position="395"/>
        <end position="415"/>
    </location>
</feature>
<feature type="topological domain" description="Extracellular" evidence="2">
    <location>
        <begin position="416"/>
        <end position="421"/>
    </location>
</feature>
<feature type="domain" description="J">
    <location>
        <begin position="12"/>
        <end position="75"/>
    </location>
</feature>
<feature type="region of interest" description="Disordered" evidence="3">
    <location>
        <begin position="215"/>
        <end position="237"/>
    </location>
</feature>
<feature type="compositionally biased region" description="Polar residues" evidence="3">
    <location>
        <begin position="215"/>
        <end position="235"/>
    </location>
</feature>
<feature type="modified residue" description="Phosphotyrosine; by host" evidence="1">
    <location>
        <position position="250"/>
    </location>
</feature>
<feature type="modified residue" description="Phosphoserine; by host" evidence="1">
    <location>
        <position position="257"/>
    </location>
</feature>
<feature type="modified residue" description="Phosphotyrosine; by host" evidence="1">
    <location>
        <position position="315"/>
    </location>
</feature>
<feature type="modified residue" description="Phosphotyrosine; by host" evidence="1">
    <location>
        <position position="322"/>
    </location>
</feature>
<proteinExistence type="evidence at protein level"/>
<reference key="1">
    <citation type="submission" date="2001-11" db="EMBL/GenBank/DDBJ databases">
        <authorList>
            <person name="Clark B.E."/>
            <person name="Griffin B.E."/>
        </authorList>
    </citation>
    <scope>NUCLEOTIDE SEQUENCE [GENOMIC DNA]</scope>
</reference>
<organism>
    <name type="scientific">Murine polyomavirus (strain BG)</name>
    <name type="common">MPyV</name>
    <dbReference type="NCBI Taxonomy" id="179241"/>
    <lineage>
        <taxon>Viruses</taxon>
        <taxon>Monodnaviria</taxon>
        <taxon>Shotokuvirae</taxon>
        <taxon>Cossaviricota</taxon>
        <taxon>Papovaviricetes</taxon>
        <taxon>Sepolyvirales</taxon>
        <taxon>Polyomaviridae</taxon>
        <taxon>Alphapolyomavirus</taxon>
        <taxon>Mus musculus polyomavirus 1</taxon>
    </lineage>
</organism>
<comment type="function">
    <text evidence="1">Plays a role in transformation by modulating the activities of cellular proteins involved in control of cell proliferation and by acting as a functional homolog of an activated tyrosine kinase-associated growth-factor receptor. Recruits upon association with host Ppp2/PP2A the Src tyrosine kinase components Src, Yes and Fyn, thereby activating their kinase activity. Activation of Shc1, Pclg1 and p85 mediate signal transduction pathways leading to cell cycle progression and cell division. MT also plays a role in regulation of early and late gene expression and in viral DNA replication.</text>
</comment>
<comment type="subunit">
    <text evidence="1">Interacts with host Ppp2/PP2A A and C subunits; this interaction alters Ppp2/PP2A substrate specificity and localization. Interacts with host Src, Yes1, and Fyn. Interacts with host Shc1, Plcg1 and p85; these interactions lead to cell cycle progression. Interacts with host 14-3-3 proteins.</text>
</comment>
<comment type="subcellular location">
    <subcellularLocation>
        <location evidence="4">Host membrane</location>
        <topology evidence="4">Single-pass membrane protein</topology>
    </subcellularLocation>
</comment>
<comment type="alternative products">
    <event type="alternative splicing"/>
    <isoform>
        <id>P0DOJ7-1</id>
        <id>P03076-1</id>
        <name>Middle T antigen</name>
        <sequence type="displayed"/>
    </isoform>
    <isoform>
        <id>P0DOJ4-2</id>
        <name>Small t antigen</name>
        <sequence type="external"/>
    </isoform>
    <isoform>
        <id>P0DOJ4-1</id>
        <id>P03074-1</id>
        <name>Large T antigen</name>
        <sequence type="external"/>
    </isoform>
</comment>
<comment type="domain">
    <text evidence="1">The NPTY motif is required for interaction with host Shc1 protein.</text>
</comment>
<comment type="PTM">
    <text evidence="1">Tyrosine-phosphorylated on three residues 250, 315 and 322, providing docking sites for host Shc1, p85, and Plcg1, respectively.</text>
</comment>
<accession>P0DOJ7</accession>
<accession>P03076</accession>
<accession>Q76TX4</accession>
<accession>Q76W01</accession>
<accession>Q89765</accession>
<keyword id="KW-0002">3D-structure</keyword>
<keyword id="KW-0025">Alternative splicing</keyword>
<keyword id="KW-0244">Early protein</keyword>
<keyword id="KW-1043">Host membrane</keyword>
<keyword id="KW-0945">Host-virus interaction</keyword>
<keyword id="KW-0472">Membrane</keyword>
<keyword id="KW-0553">Oncogene</keyword>
<keyword id="KW-0597">Phosphoprotein</keyword>
<keyword id="KW-0812">Transmembrane</keyword>
<keyword id="KW-1133">Transmembrane helix</keyword>
<evidence type="ECO:0000250" key="1">
    <source>
        <dbReference type="UniProtKB" id="P03077"/>
    </source>
</evidence>
<evidence type="ECO:0000255" key="2"/>
<evidence type="ECO:0000256" key="3">
    <source>
        <dbReference type="SAM" id="MobiDB-lite"/>
    </source>
</evidence>
<evidence type="ECO:0000305" key="4"/>
<sequence>MDRVLSRADKERLLELLKLPRQLWGDFGRMQQAYKQQSLLLHPDKGGSHALMQELNSLWGTFKTEVYNLRMNLGGTGFQVRRLHADGWNLSTKDTFGDRYYQRFCRMPLTCLVNVKYSSCSCILCLLRKQHRELKDKCDARCLVLGECFCLECYMQWFGTPTRDVLNLYADFIASMPIDWLDLDVHSVYNPKRRSEELRRAATVHYTMTTGHSAMEASTSQGNGMISSESGTPATSRRLRLPSLLSNPTYSVMRSHSYPPTRVLQQIHPHILLEEDEILVLLSPMTAYPRTPPELLYPESDQDQLEPLEEEEEEYMPMEDLYLDILPEEQVPQLIPPPIIPRAGLSPWEGLILRDLQRAHFDPILDASQRMRATHRAALRAHSMQRHLRRLGRTLLLVTFLAALLGICLMLFILIKRSRHF</sequence>
<dbReference type="EMBL" id="AF442959">
    <property type="protein sequence ID" value="AAL35608.1"/>
    <property type="molecule type" value="Genomic_DNA"/>
</dbReference>
<dbReference type="RefSeq" id="YP_009111414.1">
    <molecule id="P0DOJ7-1"/>
    <property type="nucleotide sequence ID" value="NC_001515.2"/>
</dbReference>
<dbReference type="PDB" id="1FU5">
    <property type="method" value="NMR"/>
    <property type="chains" value="B=312-326"/>
</dbReference>
<dbReference type="PDB" id="1QJB">
    <property type="method" value="X-ray"/>
    <property type="resolution" value="2.00 A"/>
    <property type="chains" value="Q/S=254-259"/>
</dbReference>
<dbReference type="PDBsum" id="1FU5"/>
<dbReference type="PDBsum" id="1QJB"/>
<dbReference type="SMR" id="P0DOJ7"/>
<dbReference type="GeneID" id="22619583"/>
<dbReference type="KEGG" id="vg:22619583"/>
<dbReference type="OrthoDB" id="14669at10239"/>
<dbReference type="Proteomes" id="UP000116380">
    <property type="component" value="Genome"/>
</dbReference>
<dbReference type="GO" id="GO:0033644">
    <property type="term" value="C:host cell membrane"/>
    <property type="evidence" value="ECO:0007669"/>
    <property type="project" value="UniProtKB-SubCell"/>
</dbReference>
<dbReference type="GO" id="GO:0016020">
    <property type="term" value="C:membrane"/>
    <property type="evidence" value="ECO:0007669"/>
    <property type="project" value="UniProtKB-KW"/>
</dbReference>
<dbReference type="Gene3D" id="1.10.287.110">
    <property type="entry name" value="DnaJ domain"/>
    <property type="match status" value="1"/>
</dbReference>
<dbReference type="Gene3D" id="1.20.120.1860">
    <property type="entry name" value="Small t-antigen, unique domain"/>
    <property type="match status" value="1"/>
</dbReference>
<dbReference type="InterPro" id="IPR001623">
    <property type="entry name" value="DnaJ_domain"/>
</dbReference>
<dbReference type="InterPro" id="IPR036869">
    <property type="entry name" value="J_dom_sf"/>
</dbReference>
<dbReference type="InterPro" id="IPR003354">
    <property type="entry name" value="Papo_T_antigen"/>
</dbReference>
<dbReference type="InterPro" id="IPR036092">
    <property type="entry name" value="Papo_T_antigensf"/>
</dbReference>
<dbReference type="Pfam" id="PF02380">
    <property type="entry name" value="Papo_T_antigen"/>
    <property type="match status" value="1"/>
</dbReference>
<dbReference type="SMART" id="SM00271">
    <property type="entry name" value="DnaJ"/>
    <property type="match status" value="1"/>
</dbReference>
<dbReference type="SUPFAM" id="SSF46565">
    <property type="entry name" value="Chaperone J-domain"/>
    <property type="match status" value="1"/>
</dbReference>
<dbReference type="SUPFAM" id="SSF161240">
    <property type="entry name" value="T-antigen specific domain-like"/>
    <property type="match status" value="1"/>
</dbReference>
<name>MT_POVBG</name>
<protein>
    <recommendedName>
        <fullName>Middle T antigen</fullName>
        <shortName>MT</shortName>
        <shortName>MT-AG</shortName>
    </recommendedName>
</protein>